<feature type="chain" id="PRO_0000241755" description="Small ribosomal subunit protein uS7">
    <location>
        <begin position="1"/>
        <end position="160"/>
    </location>
</feature>
<proteinExistence type="inferred from homology"/>
<organism>
    <name type="scientific">Ehrlichia chaffeensis (strain ATCC CRL-10679 / Arkansas)</name>
    <dbReference type="NCBI Taxonomy" id="205920"/>
    <lineage>
        <taxon>Bacteria</taxon>
        <taxon>Pseudomonadati</taxon>
        <taxon>Pseudomonadota</taxon>
        <taxon>Alphaproteobacteria</taxon>
        <taxon>Rickettsiales</taxon>
        <taxon>Anaplasmataceae</taxon>
        <taxon>Ehrlichia</taxon>
    </lineage>
</organism>
<evidence type="ECO:0000255" key="1">
    <source>
        <dbReference type="HAMAP-Rule" id="MF_00480"/>
    </source>
</evidence>
<evidence type="ECO:0000305" key="2"/>
<sequence>MSRRRRATKRVISPDSKYNSVLLARFINVIMRSGERSIAEKIVYGALSKAESRLGESAMSIFSAALNNVMPQMEVRSRRIGGVTYQVPVEVKEDRAVSLALRWIFKAAAAARKRSNKMYMDCLCNELLEAYNKRGGAYKMREEKYKMAEANKAFSHFRFN</sequence>
<reference key="1">
    <citation type="journal article" date="2006" name="PLoS Genet.">
        <title>Comparative genomics of emerging human ehrlichiosis agents.</title>
        <authorList>
            <person name="Dunning Hotopp J.C."/>
            <person name="Lin M."/>
            <person name="Madupu R."/>
            <person name="Crabtree J."/>
            <person name="Angiuoli S.V."/>
            <person name="Eisen J.A."/>
            <person name="Seshadri R."/>
            <person name="Ren Q."/>
            <person name="Wu M."/>
            <person name="Utterback T.R."/>
            <person name="Smith S."/>
            <person name="Lewis M."/>
            <person name="Khouri H."/>
            <person name="Zhang C."/>
            <person name="Niu H."/>
            <person name="Lin Q."/>
            <person name="Ohashi N."/>
            <person name="Zhi N."/>
            <person name="Nelson W.C."/>
            <person name="Brinkac L.M."/>
            <person name="Dodson R.J."/>
            <person name="Rosovitz M.J."/>
            <person name="Sundaram J.P."/>
            <person name="Daugherty S.C."/>
            <person name="Davidsen T."/>
            <person name="Durkin A.S."/>
            <person name="Gwinn M.L."/>
            <person name="Haft D.H."/>
            <person name="Selengut J.D."/>
            <person name="Sullivan S.A."/>
            <person name="Zafar N."/>
            <person name="Zhou L."/>
            <person name="Benahmed F."/>
            <person name="Forberger H."/>
            <person name="Halpin R."/>
            <person name="Mulligan S."/>
            <person name="Robinson J."/>
            <person name="White O."/>
            <person name="Rikihisa Y."/>
            <person name="Tettelin H."/>
        </authorList>
    </citation>
    <scope>NUCLEOTIDE SEQUENCE [LARGE SCALE GENOMIC DNA]</scope>
    <source>
        <strain>ATCC CRL-10679 / Arkansas</strain>
    </source>
</reference>
<dbReference type="EMBL" id="CP000236">
    <property type="protein sequence ID" value="ABD45424.1"/>
    <property type="molecule type" value="Genomic_DNA"/>
</dbReference>
<dbReference type="RefSeq" id="WP_006010361.1">
    <property type="nucleotide sequence ID" value="NC_007799.1"/>
</dbReference>
<dbReference type="SMR" id="Q2GFN4"/>
<dbReference type="STRING" id="205920.ECH_0962"/>
<dbReference type="KEGG" id="ech:ECH_0962"/>
<dbReference type="eggNOG" id="COG0049">
    <property type="taxonomic scope" value="Bacteria"/>
</dbReference>
<dbReference type="HOGENOM" id="CLU_072226_1_1_5"/>
<dbReference type="OrthoDB" id="9807653at2"/>
<dbReference type="Proteomes" id="UP000008320">
    <property type="component" value="Chromosome"/>
</dbReference>
<dbReference type="GO" id="GO:0015935">
    <property type="term" value="C:small ribosomal subunit"/>
    <property type="evidence" value="ECO:0007669"/>
    <property type="project" value="InterPro"/>
</dbReference>
<dbReference type="GO" id="GO:0019843">
    <property type="term" value="F:rRNA binding"/>
    <property type="evidence" value="ECO:0007669"/>
    <property type="project" value="UniProtKB-UniRule"/>
</dbReference>
<dbReference type="GO" id="GO:0003735">
    <property type="term" value="F:structural constituent of ribosome"/>
    <property type="evidence" value="ECO:0007669"/>
    <property type="project" value="InterPro"/>
</dbReference>
<dbReference type="GO" id="GO:0000049">
    <property type="term" value="F:tRNA binding"/>
    <property type="evidence" value="ECO:0007669"/>
    <property type="project" value="UniProtKB-UniRule"/>
</dbReference>
<dbReference type="GO" id="GO:0006412">
    <property type="term" value="P:translation"/>
    <property type="evidence" value="ECO:0007669"/>
    <property type="project" value="UniProtKB-UniRule"/>
</dbReference>
<dbReference type="CDD" id="cd14869">
    <property type="entry name" value="uS7_Bacteria"/>
    <property type="match status" value="1"/>
</dbReference>
<dbReference type="FunFam" id="1.10.455.10:FF:000001">
    <property type="entry name" value="30S ribosomal protein S7"/>
    <property type="match status" value="1"/>
</dbReference>
<dbReference type="Gene3D" id="1.10.455.10">
    <property type="entry name" value="Ribosomal protein S7 domain"/>
    <property type="match status" value="1"/>
</dbReference>
<dbReference type="HAMAP" id="MF_00480_B">
    <property type="entry name" value="Ribosomal_uS7_B"/>
    <property type="match status" value="1"/>
</dbReference>
<dbReference type="InterPro" id="IPR000235">
    <property type="entry name" value="Ribosomal_uS7"/>
</dbReference>
<dbReference type="InterPro" id="IPR005717">
    <property type="entry name" value="Ribosomal_uS7_bac/org-type"/>
</dbReference>
<dbReference type="InterPro" id="IPR023798">
    <property type="entry name" value="Ribosomal_uS7_dom"/>
</dbReference>
<dbReference type="InterPro" id="IPR036823">
    <property type="entry name" value="Ribosomal_uS7_dom_sf"/>
</dbReference>
<dbReference type="NCBIfam" id="TIGR01029">
    <property type="entry name" value="rpsG_bact"/>
    <property type="match status" value="1"/>
</dbReference>
<dbReference type="PANTHER" id="PTHR11205">
    <property type="entry name" value="RIBOSOMAL PROTEIN S7"/>
    <property type="match status" value="1"/>
</dbReference>
<dbReference type="Pfam" id="PF00177">
    <property type="entry name" value="Ribosomal_S7"/>
    <property type="match status" value="1"/>
</dbReference>
<dbReference type="PIRSF" id="PIRSF002122">
    <property type="entry name" value="RPS7p_RPS7a_RPS5e_RPS7o"/>
    <property type="match status" value="1"/>
</dbReference>
<dbReference type="SUPFAM" id="SSF47973">
    <property type="entry name" value="Ribosomal protein S7"/>
    <property type="match status" value="1"/>
</dbReference>
<comment type="function">
    <text evidence="1">One of the primary rRNA binding proteins, it binds directly to 16S rRNA where it nucleates assembly of the head domain of the 30S subunit. Is located at the subunit interface close to the decoding center, probably blocks exit of the E-site tRNA.</text>
</comment>
<comment type="subunit">
    <text evidence="1">Part of the 30S ribosomal subunit. Contacts proteins S9 and S11.</text>
</comment>
<comment type="similarity">
    <text evidence="1">Belongs to the universal ribosomal protein uS7 family.</text>
</comment>
<protein>
    <recommendedName>
        <fullName evidence="1">Small ribosomal subunit protein uS7</fullName>
    </recommendedName>
    <alternativeName>
        <fullName evidence="2">30S ribosomal protein S7</fullName>
    </alternativeName>
</protein>
<name>RS7_EHRCR</name>
<gene>
    <name evidence="1" type="primary">rpsG</name>
    <name type="ordered locus">ECH_0962</name>
</gene>
<accession>Q2GFN4</accession>
<keyword id="KW-1185">Reference proteome</keyword>
<keyword id="KW-0687">Ribonucleoprotein</keyword>
<keyword id="KW-0689">Ribosomal protein</keyword>
<keyword id="KW-0694">RNA-binding</keyword>
<keyword id="KW-0699">rRNA-binding</keyword>
<keyword id="KW-0820">tRNA-binding</keyword>